<name>PXR1_PHANO</name>
<keyword id="KW-0539">Nucleus</keyword>
<keyword id="KW-0690">Ribosome biogenesis</keyword>
<keyword id="KW-0698">rRNA processing</keyword>
<evidence type="ECO:0000250" key="1"/>
<evidence type="ECO:0000255" key="2">
    <source>
        <dbReference type="PROSITE-ProRule" id="PRU00092"/>
    </source>
</evidence>
<evidence type="ECO:0000256" key="3">
    <source>
        <dbReference type="SAM" id="MobiDB-lite"/>
    </source>
</evidence>
<evidence type="ECO:0000305" key="4"/>
<feature type="chain" id="PRO_0000324894" description="Protein PXR1">
    <location>
        <begin position="1"/>
        <end position="358"/>
    </location>
</feature>
<feature type="domain" description="G-patch" evidence="2">
    <location>
        <begin position="25"/>
        <end position="79"/>
    </location>
</feature>
<feature type="region of interest" description="Disordered" evidence="3">
    <location>
        <begin position="1"/>
        <end position="26"/>
    </location>
</feature>
<feature type="region of interest" description="Disordered" evidence="3">
    <location>
        <begin position="146"/>
        <end position="342"/>
    </location>
</feature>
<feature type="compositionally biased region" description="Polar residues" evidence="3">
    <location>
        <begin position="11"/>
        <end position="26"/>
    </location>
</feature>
<feature type="compositionally biased region" description="Basic and acidic residues" evidence="3">
    <location>
        <begin position="146"/>
        <end position="171"/>
    </location>
</feature>
<feature type="compositionally biased region" description="Basic and acidic residues" evidence="3">
    <location>
        <begin position="199"/>
        <end position="217"/>
    </location>
</feature>
<feature type="compositionally biased region" description="Basic residues" evidence="3">
    <location>
        <begin position="218"/>
        <end position="227"/>
    </location>
</feature>
<feature type="compositionally biased region" description="Acidic residues" evidence="3">
    <location>
        <begin position="287"/>
        <end position="299"/>
    </location>
</feature>
<feature type="compositionally biased region" description="Polar residues" evidence="3">
    <location>
        <begin position="300"/>
        <end position="315"/>
    </location>
</feature>
<feature type="compositionally biased region" description="Basic residues" evidence="3">
    <location>
        <begin position="328"/>
        <end position="339"/>
    </location>
</feature>
<dbReference type="EMBL" id="CH445329">
    <property type="protein sequence ID" value="EAT89113.1"/>
    <property type="molecule type" value="Genomic_DNA"/>
</dbReference>
<dbReference type="RefSeq" id="XP_001794453.1">
    <property type="nucleotide sequence ID" value="XM_001794401.1"/>
</dbReference>
<dbReference type="SMR" id="Q0UWF6"/>
<dbReference type="STRING" id="321614.Q0UWF6"/>
<dbReference type="EnsemblFungi" id="SNOT_03908">
    <property type="protein sequence ID" value="SNOT_03908"/>
    <property type="gene ID" value="SNOG_03908"/>
</dbReference>
<dbReference type="GeneID" id="5971316"/>
<dbReference type="KEGG" id="pno:SNOG_03908"/>
<dbReference type="VEuPathDB" id="FungiDB:JI435_039080"/>
<dbReference type="eggNOG" id="KOG2809">
    <property type="taxonomic scope" value="Eukaryota"/>
</dbReference>
<dbReference type="HOGENOM" id="CLU_052839_0_0_1"/>
<dbReference type="InParanoid" id="Q0UWF6"/>
<dbReference type="OMA" id="PCWDQSS"/>
<dbReference type="OrthoDB" id="29523at2759"/>
<dbReference type="Proteomes" id="UP000001055">
    <property type="component" value="Unassembled WGS sequence"/>
</dbReference>
<dbReference type="GO" id="GO:0005730">
    <property type="term" value="C:nucleolus"/>
    <property type="evidence" value="ECO:0007669"/>
    <property type="project" value="UniProtKB-SubCell"/>
</dbReference>
<dbReference type="GO" id="GO:0003676">
    <property type="term" value="F:nucleic acid binding"/>
    <property type="evidence" value="ECO:0007669"/>
    <property type="project" value="InterPro"/>
</dbReference>
<dbReference type="GO" id="GO:0006364">
    <property type="term" value="P:rRNA processing"/>
    <property type="evidence" value="ECO:0007669"/>
    <property type="project" value="UniProtKB-KW"/>
</dbReference>
<dbReference type="InterPro" id="IPR000467">
    <property type="entry name" value="G_patch_dom"/>
</dbReference>
<dbReference type="InterPro" id="IPR050656">
    <property type="entry name" value="PINX1"/>
</dbReference>
<dbReference type="PANTHER" id="PTHR23149">
    <property type="entry name" value="G PATCH DOMAIN CONTAINING PROTEIN"/>
    <property type="match status" value="1"/>
</dbReference>
<dbReference type="PANTHER" id="PTHR23149:SF31">
    <property type="entry name" value="PROTEIN PXR1"/>
    <property type="match status" value="1"/>
</dbReference>
<dbReference type="SMART" id="SM00443">
    <property type="entry name" value="G_patch"/>
    <property type="match status" value="1"/>
</dbReference>
<dbReference type="PROSITE" id="PS50174">
    <property type="entry name" value="G_PATCH"/>
    <property type="match status" value="1"/>
</dbReference>
<comment type="function">
    <text evidence="1">Involved in rRNA-processing at A0, A1 and A2 sites and negatively regulates telomerase.</text>
</comment>
<comment type="subcellular location">
    <subcellularLocation>
        <location evidence="1">Nucleus</location>
        <location evidence="1">Nucleolus</location>
    </subcellularLocation>
</comment>
<comment type="similarity">
    <text evidence="4">Belongs to the PINX1 family.</text>
</comment>
<sequence length="358" mass="39481">MGLAAPKNRSKISNDPQNTTWANNTSRFGHRILTSQGWQPGDSLGASDAAHAAHYTVASQSHIRVLLKDDNLGLGAKRGSERAENFGLAGLESILGRLNGKEAEVKKEEERREEIEKRAFVYRKYGMMNFVSGGFLVGDKIKSRDEVKTETQAKVEVKSEPESDGAKEDDRKKKRKRKDRDEAGVEGEEEPKLKRKKKSMDLRDQAKKDIAAESSKDKKGKKSKKDKKAVTSDPEPTSSGVASPASDPEPLTDKARRKAEKKARKEEKRLKKALKKAAKEAAKPMGDVEDLSSESEDESTPSASRPATGTSTPTVSAAGLTFNPRGMHSVRQKWIRSKKSATMDAQAMREIFMIKTPS</sequence>
<reference key="1">
    <citation type="journal article" date="2007" name="Plant Cell">
        <title>Dothideomycete-plant interactions illuminated by genome sequencing and EST analysis of the wheat pathogen Stagonospora nodorum.</title>
        <authorList>
            <person name="Hane J.K."/>
            <person name="Lowe R.G.T."/>
            <person name="Solomon P.S."/>
            <person name="Tan K.-C."/>
            <person name="Schoch C.L."/>
            <person name="Spatafora J.W."/>
            <person name="Crous P.W."/>
            <person name="Kodira C.D."/>
            <person name="Birren B.W."/>
            <person name="Galagan J.E."/>
            <person name="Torriani S.F.F."/>
            <person name="McDonald B.A."/>
            <person name="Oliver R.P."/>
        </authorList>
    </citation>
    <scope>NUCLEOTIDE SEQUENCE [LARGE SCALE GENOMIC DNA]</scope>
    <source>
        <strain>SN15 / ATCC MYA-4574 / FGSC 10173</strain>
    </source>
</reference>
<accession>Q0UWF6</accession>
<proteinExistence type="inferred from homology"/>
<gene>
    <name type="primary">PXR1</name>
    <name type="ORF">SNOG_03908</name>
</gene>
<organism>
    <name type="scientific">Phaeosphaeria nodorum (strain SN15 / ATCC MYA-4574 / FGSC 10173)</name>
    <name type="common">Glume blotch fungus</name>
    <name type="synonym">Parastagonospora nodorum</name>
    <dbReference type="NCBI Taxonomy" id="321614"/>
    <lineage>
        <taxon>Eukaryota</taxon>
        <taxon>Fungi</taxon>
        <taxon>Dikarya</taxon>
        <taxon>Ascomycota</taxon>
        <taxon>Pezizomycotina</taxon>
        <taxon>Dothideomycetes</taxon>
        <taxon>Pleosporomycetidae</taxon>
        <taxon>Pleosporales</taxon>
        <taxon>Pleosporineae</taxon>
        <taxon>Phaeosphaeriaceae</taxon>
        <taxon>Parastagonospora</taxon>
    </lineage>
</organism>
<protein>
    <recommendedName>
        <fullName>Protein PXR1</fullName>
    </recommendedName>
    <alternativeName>
        <fullName>PinX1-related protein 1</fullName>
    </alternativeName>
</protein>